<organism>
    <name type="scientific">Drosophila melanogaster</name>
    <name type="common">Fruit fly</name>
    <dbReference type="NCBI Taxonomy" id="7227"/>
    <lineage>
        <taxon>Eukaryota</taxon>
        <taxon>Metazoa</taxon>
        <taxon>Ecdysozoa</taxon>
        <taxon>Arthropoda</taxon>
        <taxon>Hexapoda</taxon>
        <taxon>Insecta</taxon>
        <taxon>Pterygota</taxon>
        <taxon>Neoptera</taxon>
        <taxon>Endopterygota</taxon>
        <taxon>Diptera</taxon>
        <taxon>Brachycera</taxon>
        <taxon>Muscomorpha</taxon>
        <taxon>Ephydroidea</taxon>
        <taxon>Drosophilidae</taxon>
        <taxon>Drosophila</taxon>
        <taxon>Sophophora</taxon>
    </lineage>
</organism>
<comment type="cofactor">
    <cofactor evidence="1">
        <name>heme</name>
        <dbReference type="ChEBI" id="CHEBI:30413"/>
    </cofactor>
</comment>
<comment type="subcellular location">
    <subcellularLocation>
        <location evidence="3">Mitochondrion membrane</location>
    </subcellularLocation>
</comment>
<comment type="similarity">
    <text evidence="3">Belongs to the cytochrome P450 family.</text>
</comment>
<reference key="1">
    <citation type="journal article" date="2000" name="Science">
        <title>The genome sequence of Drosophila melanogaster.</title>
        <authorList>
            <person name="Adams M.D."/>
            <person name="Celniker S.E."/>
            <person name="Holt R.A."/>
            <person name="Evans C.A."/>
            <person name="Gocayne J.D."/>
            <person name="Amanatides P.G."/>
            <person name="Scherer S.E."/>
            <person name="Li P.W."/>
            <person name="Hoskins R.A."/>
            <person name="Galle R.F."/>
            <person name="George R.A."/>
            <person name="Lewis S.E."/>
            <person name="Richards S."/>
            <person name="Ashburner M."/>
            <person name="Henderson S.N."/>
            <person name="Sutton G.G."/>
            <person name="Wortman J.R."/>
            <person name="Yandell M.D."/>
            <person name="Zhang Q."/>
            <person name="Chen L.X."/>
            <person name="Brandon R.C."/>
            <person name="Rogers Y.-H.C."/>
            <person name="Blazej R.G."/>
            <person name="Champe M."/>
            <person name="Pfeiffer B.D."/>
            <person name="Wan K.H."/>
            <person name="Doyle C."/>
            <person name="Baxter E.G."/>
            <person name="Helt G."/>
            <person name="Nelson C.R."/>
            <person name="Miklos G.L.G."/>
            <person name="Abril J.F."/>
            <person name="Agbayani A."/>
            <person name="An H.-J."/>
            <person name="Andrews-Pfannkoch C."/>
            <person name="Baldwin D."/>
            <person name="Ballew R.M."/>
            <person name="Basu A."/>
            <person name="Baxendale J."/>
            <person name="Bayraktaroglu L."/>
            <person name="Beasley E.M."/>
            <person name="Beeson K.Y."/>
            <person name="Benos P.V."/>
            <person name="Berman B.P."/>
            <person name="Bhandari D."/>
            <person name="Bolshakov S."/>
            <person name="Borkova D."/>
            <person name="Botchan M.R."/>
            <person name="Bouck J."/>
            <person name="Brokstein P."/>
            <person name="Brottier P."/>
            <person name="Burtis K.C."/>
            <person name="Busam D.A."/>
            <person name="Butler H."/>
            <person name="Cadieu E."/>
            <person name="Center A."/>
            <person name="Chandra I."/>
            <person name="Cherry J.M."/>
            <person name="Cawley S."/>
            <person name="Dahlke C."/>
            <person name="Davenport L.B."/>
            <person name="Davies P."/>
            <person name="de Pablos B."/>
            <person name="Delcher A."/>
            <person name="Deng Z."/>
            <person name="Mays A.D."/>
            <person name="Dew I."/>
            <person name="Dietz S.M."/>
            <person name="Dodson K."/>
            <person name="Doup L.E."/>
            <person name="Downes M."/>
            <person name="Dugan-Rocha S."/>
            <person name="Dunkov B.C."/>
            <person name="Dunn P."/>
            <person name="Durbin K.J."/>
            <person name="Evangelista C.C."/>
            <person name="Ferraz C."/>
            <person name="Ferriera S."/>
            <person name="Fleischmann W."/>
            <person name="Fosler C."/>
            <person name="Gabrielian A.E."/>
            <person name="Garg N.S."/>
            <person name="Gelbart W.M."/>
            <person name="Glasser K."/>
            <person name="Glodek A."/>
            <person name="Gong F."/>
            <person name="Gorrell J.H."/>
            <person name="Gu Z."/>
            <person name="Guan P."/>
            <person name="Harris M."/>
            <person name="Harris N.L."/>
            <person name="Harvey D.A."/>
            <person name="Heiman T.J."/>
            <person name="Hernandez J.R."/>
            <person name="Houck J."/>
            <person name="Hostin D."/>
            <person name="Houston K.A."/>
            <person name="Howland T.J."/>
            <person name="Wei M.-H."/>
            <person name="Ibegwam C."/>
            <person name="Jalali M."/>
            <person name="Kalush F."/>
            <person name="Karpen G.H."/>
            <person name="Ke Z."/>
            <person name="Kennison J.A."/>
            <person name="Ketchum K.A."/>
            <person name="Kimmel B.E."/>
            <person name="Kodira C.D."/>
            <person name="Kraft C.L."/>
            <person name="Kravitz S."/>
            <person name="Kulp D."/>
            <person name="Lai Z."/>
            <person name="Lasko P."/>
            <person name="Lei Y."/>
            <person name="Levitsky A.A."/>
            <person name="Li J.H."/>
            <person name="Li Z."/>
            <person name="Liang Y."/>
            <person name="Lin X."/>
            <person name="Liu X."/>
            <person name="Mattei B."/>
            <person name="McIntosh T.C."/>
            <person name="McLeod M.P."/>
            <person name="McPherson D."/>
            <person name="Merkulov G."/>
            <person name="Milshina N.V."/>
            <person name="Mobarry C."/>
            <person name="Morris J."/>
            <person name="Moshrefi A."/>
            <person name="Mount S.M."/>
            <person name="Moy M."/>
            <person name="Murphy B."/>
            <person name="Murphy L."/>
            <person name="Muzny D.M."/>
            <person name="Nelson D.L."/>
            <person name="Nelson D.R."/>
            <person name="Nelson K.A."/>
            <person name="Nixon K."/>
            <person name="Nusskern D.R."/>
            <person name="Pacleb J.M."/>
            <person name="Palazzolo M."/>
            <person name="Pittman G.S."/>
            <person name="Pan S."/>
            <person name="Pollard J."/>
            <person name="Puri V."/>
            <person name="Reese M.G."/>
            <person name="Reinert K."/>
            <person name="Remington K."/>
            <person name="Saunders R.D.C."/>
            <person name="Scheeler F."/>
            <person name="Shen H."/>
            <person name="Shue B.C."/>
            <person name="Siden-Kiamos I."/>
            <person name="Simpson M."/>
            <person name="Skupski M.P."/>
            <person name="Smith T.J."/>
            <person name="Spier E."/>
            <person name="Spradling A.C."/>
            <person name="Stapleton M."/>
            <person name="Strong R."/>
            <person name="Sun E."/>
            <person name="Svirskas R."/>
            <person name="Tector C."/>
            <person name="Turner R."/>
            <person name="Venter E."/>
            <person name="Wang A.H."/>
            <person name="Wang X."/>
            <person name="Wang Z.-Y."/>
            <person name="Wassarman D.A."/>
            <person name="Weinstock G.M."/>
            <person name="Weissenbach J."/>
            <person name="Williams S.M."/>
            <person name="Woodage T."/>
            <person name="Worley K.C."/>
            <person name="Wu D."/>
            <person name="Yang S."/>
            <person name="Yao Q.A."/>
            <person name="Ye J."/>
            <person name="Yeh R.-F."/>
            <person name="Zaveri J.S."/>
            <person name="Zhan M."/>
            <person name="Zhang G."/>
            <person name="Zhao Q."/>
            <person name="Zheng L."/>
            <person name="Zheng X.H."/>
            <person name="Zhong F.N."/>
            <person name="Zhong W."/>
            <person name="Zhou X."/>
            <person name="Zhu S.C."/>
            <person name="Zhu X."/>
            <person name="Smith H.O."/>
            <person name="Gibbs R.A."/>
            <person name="Myers E.W."/>
            <person name="Rubin G.M."/>
            <person name="Venter J.C."/>
        </authorList>
    </citation>
    <scope>NUCLEOTIDE SEQUENCE [LARGE SCALE GENOMIC DNA]</scope>
    <source>
        <strain>Berkeley</strain>
    </source>
</reference>
<reference key="2">
    <citation type="journal article" date="2002" name="Genome Biol.">
        <title>Annotation of the Drosophila melanogaster euchromatic genome: a systematic review.</title>
        <authorList>
            <person name="Misra S."/>
            <person name="Crosby M.A."/>
            <person name="Mungall C.J."/>
            <person name="Matthews B.B."/>
            <person name="Campbell K.S."/>
            <person name="Hradecky P."/>
            <person name="Huang Y."/>
            <person name="Kaminker J.S."/>
            <person name="Millburn G.H."/>
            <person name="Prochnik S.E."/>
            <person name="Smith C.D."/>
            <person name="Tupy J.L."/>
            <person name="Whitfield E.J."/>
            <person name="Bayraktaroglu L."/>
            <person name="Berman B.P."/>
            <person name="Bettencourt B.R."/>
            <person name="Celniker S.E."/>
            <person name="de Grey A.D.N.J."/>
            <person name="Drysdale R.A."/>
            <person name="Harris N.L."/>
            <person name="Richter J."/>
            <person name="Russo S."/>
            <person name="Schroeder A.J."/>
            <person name="Shu S.Q."/>
            <person name="Stapleton M."/>
            <person name="Yamada C."/>
            <person name="Ashburner M."/>
            <person name="Gelbart W.M."/>
            <person name="Rubin G.M."/>
            <person name="Lewis S.E."/>
        </authorList>
    </citation>
    <scope>GENOME REANNOTATION</scope>
    <source>
        <strain>Berkeley</strain>
    </source>
</reference>
<reference key="3">
    <citation type="submission" date="2005-05" db="EMBL/GenBank/DDBJ databases">
        <authorList>
            <person name="Stapleton M."/>
            <person name="Carlson J.W."/>
            <person name="Chavez C."/>
            <person name="Frise E."/>
            <person name="George R.A."/>
            <person name="Pacleb J.M."/>
            <person name="Park S."/>
            <person name="Wan K.H."/>
            <person name="Yu C."/>
            <person name="Celniker S.E."/>
        </authorList>
    </citation>
    <scope>NUCLEOTIDE SEQUENCE [LARGE SCALE MRNA] OF 3-514</scope>
    <source>
        <strain>Berkeley</strain>
    </source>
</reference>
<evidence type="ECO:0000250" key="1"/>
<evidence type="ECO:0000255" key="2"/>
<evidence type="ECO:0000305" key="3"/>
<feature type="transit peptide" description="Mitochondrion" evidence="2">
    <location>
        <begin position="1"/>
        <end status="unknown"/>
    </location>
</feature>
<feature type="chain" id="PRO_0000003614" description="Probable cytochrome P450 12e1, mitochondrial">
    <location>
        <begin status="unknown"/>
        <end position="522"/>
    </location>
</feature>
<feature type="binding site" description="axial binding residue" evidence="1">
    <location>
        <position position="468"/>
    </location>
    <ligand>
        <name>heme</name>
        <dbReference type="ChEBI" id="CHEBI:30413"/>
    </ligand>
    <ligandPart>
        <name>Fe</name>
        <dbReference type="ChEBI" id="CHEBI:18248"/>
    </ligandPart>
</feature>
<gene>
    <name type="primary">Cyp12e1</name>
    <name type="ORF">CG14680</name>
</gene>
<dbReference type="EC" id="1.14.-.-"/>
<dbReference type="EMBL" id="AE014297">
    <property type="protein sequence ID" value="AAF54532.4"/>
    <property type="molecule type" value="Genomic_DNA"/>
</dbReference>
<dbReference type="EMBL" id="BT023136">
    <property type="protein sequence ID" value="AAY55552.1"/>
    <property type="molecule type" value="mRNA"/>
</dbReference>
<dbReference type="EMBL" id="BT023153">
    <property type="protein sequence ID" value="AAY55569.1"/>
    <property type="molecule type" value="mRNA"/>
</dbReference>
<dbReference type="RefSeq" id="NP_650003.4">
    <property type="nucleotide sequence ID" value="NM_141746.4"/>
</dbReference>
<dbReference type="SMR" id="Q9VGZ0"/>
<dbReference type="FunCoup" id="Q9VGZ0">
    <property type="interactions" value="8"/>
</dbReference>
<dbReference type="IntAct" id="Q9VGZ0">
    <property type="interactions" value="2"/>
</dbReference>
<dbReference type="STRING" id="7227.FBpp0290498"/>
<dbReference type="PaxDb" id="7227-FBpp0290498"/>
<dbReference type="DNASU" id="41272"/>
<dbReference type="EnsemblMetazoa" id="FBtr0301283">
    <property type="protein sequence ID" value="FBpp0290498"/>
    <property type="gene ID" value="FBgn0037817"/>
</dbReference>
<dbReference type="GeneID" id="41272"/>
<dbReference type="KEGG" id="dme:Dmel_CG14680"/>
<dbReference type="UCSC" id="CG14680-RA">
    <property type="organism name" value="d. melanogaster"/>
</dbReference>
<dbReference type="AGR" id="FB:FBgn0037817"/>
<dbReference type="CTD" id="41272"/>
<dbReference type="FlyBase" id="FBgn0037817">
    <property type="gene designation" value="Cyp12e1"/>
</dbReference>
<dbReference type="VEuPathDB" id="VectorBase:FBgn0037817"/>
<dbReference type="eggNOG" id="KOG0159">
    <property type="taxonomic scope" value="Eukaryota"/>
</dbReference>
<dbReference type="GeneTree" id="ENSGT00940000165868"/>
<dbReference type="HOGENOM" id="CLU_001570_28_0_1"/>
<dbReference type="InParanoid" id="Q9VGZ0"/>
<dbReference type="OMA" id="PPIWKYL"/>
<dbReference type="OrthoDB" id="3945418at2759"/>
<dbReference type="PhylomeDB" id="Q9VGZ0"/>
<dbReference type="SignaLink" id="Q9VGZ0"/>
<dbReference type="BioGRID-ORCS" id="41272">
    <property type="hits" value="0 hits in 1 CRISPR screen"/>
</dbReference>
<dbReference type="GenomeRNAi" id="41272"/>
<dbReference type="PRO" id="PR:Q9VGZ0"/>
<dbReference type="Proteomes" id="UP000000803">
    <property type="component" value="Chromosome 3R"/>
</dbReference>
<dbReference type="Bgee" id="FBgn0037817">
    <property type="expression patterns" value="Expressed in embryonic/larval hemocyte (Drosophila) and 54 other cell types or tissues"/>
</dbReference>
<dbReference type="GO" id="GO:0031966">
    <property type="term" value="C:mitochondrial membrane"/>
    <property type="evidence" value="ECO:0007669"/>
    <property type="project" value="UniProtKB-SubCell"/>
</dbReference>
<dbReference type="GO" id="GO:0020037">
    <property type="term" value="F:heme binding"/>
    <property type="evidence" value="ECO:0007669"/>
    <property type="project" value="InterPro"/>
</dbReference>
<dbReference type="GO" id="GO:0005506">
    <property type="term" value="F:iron ion binding"/>
    <property type="evidence" value="ECO:0007669"/>
    <property type="project" value="InterPro"/>
</dbReference>
<dbReference type="GO" id="GO:0004497">
    <property type="term" value="F:monooxygenase activity"/>
    <property type="evidence" value="ECO:0007669"/>
    <property type="project" value="UniProtKB-KW"/>
</dbReference>
<dbReference type="GO" id="GO:0016705">
    <property type="term" value="F:oxidoreductase activity, acting on paired donors, with incorporation or reduction of molecular oxygen"/>
    <property type="evidence" value="ECO:0007669"/>
    <property type="project" value="InterPro"/>
</dbReference>
<dbReference type="CDD" id="cd11054">
    <property type="entry name" value="CYP24A1-like"/>
    <property type="match status" value="1"/>
</dbReference>
<dbReference type="FunFam" id="1.10.630.10:FF:000006">
    <property type="entry name" value="Cytochrome P450 302a1, mitochondrial"/>
    <property type="match status" value="1"/>
</dbReference>
<dbReference type="Gene3D" id="1.10.630.10">
    <property type="entry name" value="Cytochrome P450"/>
    <property type="match status" value="1"/>
</dbReference>
<dbReference type="InterPro" id="IPR050479">
    <property type="entry name" value="CYP11_CYP27_families"/>
</dbReference>
<dbReference type="InterPro" id="IPR001128">
    <property type="entry name" value="Cyt_P450"/>
</dbReference>
<dbReference type="InterPro" id="IPR017972">
    <property type="entry name" value="Cyt_P450_CS"/>
</dbReference>
<dbReference type="InterPro" id="IPR002401">
    <property type="entry name" value="Cyt_P450_E_grp-I"/>
</dbReference>
<dbReference type="InterPro" id="IPR036396">
    <property type="entry name" value="Cyt_P450_sf"/>
</dbReference>
<dbReference type="PANTHER" id="PTHR24279">
    <property type="entry name" value="CYTOCHROME P450"/>
    <property type="match status" value="1"/>
</dbReference>
<dbReference type="PANTHER" id="PTHR24279:SF120">
    <property type="entry name" value="CYTOCHROME P450"/>
    <property type="match status" value="1"/>
</dbReference>
<dbReference type="Pfam" id="PF00067">
    <property type="entry name" value="p450"/>
    <property type="match status" value="1"/>
</dbReference>
<dbReference type="PRINTS" id="PR00463">
    <property type="entry name" value="EP450I"/>
</dbReference>
<dbReference type="PRINTS" id="PR00385">
    <property type="entry name" value="P450"/>
</dbReference>
<dbReference type="SUPFAM" id="SSF48264">
    <property type="entry name" value="Cytochrome P450"/>
    <property type="match status" value="1"/>
</dbReference>
<dbReference type="PROSITE" id="PS00086">
    <property type="entry name" value="CYTOCHROME_P450"/>
    <property type="match status" value="1"/>
</dbReference>
<name>C12E1_DROME</name>
<protein>
    <recommendedName>
        <fullName>Probable cytochrome P450 12e1, mitochondrial</fullName>
        <ecNumber>1.14.-.-</ecNumber>
    </recommendedName>
    <alternativeName>
        <fullName>CYPXIIE1</fullName>
    </alternativeName>
</protein>
<sequence>MLSTQWNANKQISRQIYQLCRGLAQKATAVNLEEAKPYADIPGPSKLQLIRAFLPGGLYKNLPVHEMFLDMNRQYGSIFRMPSVAGTDLVLTMNPQDYEVIFRNEGQYPYRRSFEVMDYFKRVHRREVFDGYDGLTSGNGPAWGKMRTAVNPILLQPRNAKLYMTNLVQVSDEFLERIRIIRDPVTQEMPDDFAVDIRHLVIESICSVALNTHLGLLGEQRNNKDIQKLVLALQDVVELGFQLDIMPAFWKYLPMPNFKKLMRSLDTITDFCYFHIGNALKRIEEDAKAGTLNEIGLETSLLEKLARFDRQTAVIIAMDLLFAGADPTLVTLGGILFSLSKSPDKQARLLEEIRGILPNKDSSLTIENMRNLPYLRACIKEGIRMYPIGPGTLRRMPHDVVLSGYRVVAGTDVGIAANYQMANMEQFVPKVREFIPERWLRDESNSHLVGETATPFMYLPFGFGPRSCAGKRIVDMMLEIAISRLVRNFKIGFDYPIENAFKAQFFVQPNIPFKFKFIERNE</sequence>
<proteinExistence type="evidence at transcript level"/>
<accession>Q9VGZ0</accession>
<accession>Q4V453</accession>
<accession>Q4V470</accession>
<accession>Q8INL9</accession>
<keyword id="KW-0349">Heme</keyword>
<keyword id="KW-0408">Iron</keyword>
<keyword id="KW-0472">Membrane</keyword>
<keyword id="KW-0479">Metal-binding</keyword>
<keyword id="KW-0496">Mitochondrion</keyword>
<keyword id="KW-0503">Monooxygenase</keyword>
<keyword id="KW-0560">Oxidoreductase</keyword>
<keyword id="KW-1185">Reference proteome</keyword>
<keyword id="KW-0809">Transit peptide</keyword>